<sequence>MVAVAILAAGKGTRMKSDLPKVLHPLGGRSLVERVIESCALIKPERICTIVGYRAAEVKMALAHLPHLEFVEQTEQLGTGHAVQQLLEPLKDFVGDVVILNGDVPLLRPETIADLVSTHQKNNNDATLLTAQLPNPTGYGRVFCDGDNLVTQIVEHRDCNDAQRKNNRINAGVYCFKWGVLAEALPKLTTNNDQQEYYLTDVILHCDKVMAMDVADFQEISGINDRFQLSAAYEILQDRIKEKWMKAGVMIHQPDTVTIDDTVQLEPDVMIEPQTHLRGNSLIKTGCRLGPGSLIENSVIEANTTILYSVVSDSQVGENAQIGPYTHIRGQAKVGEQCRIGNFVEVKKSTIGNNTNMAHLSYIGDATLGAKVNIGAGTITANYDGVNKHQTVIGDRSKTGANSVLVAPITIGEDVTIAAGSTITKDVDNDCLVVARARQKEIKGWRLQS</sequence>
<comment type="function">
    <text evidence="1">Catalyzes the last two sequential reactions in the de novo biosynthetic pathway for UDP-N-acetylglucosamine (UDP-GlcNAc). The C-terminal domain catalyzes the transfer of acetyl group from acetyl coenzyme A to glucosamine-1-phosphate (GlcN-1-P) to produce N-acetylglucosamine-1-phosphate (GlcNAc-1-P), which is converted into UDP-GlcNAc by the transfer of uridine 5-monophosphate (from uridine 5-triphosphate), a reaction catalyzed by the N-terminal domain.</text>
</comment>
<comment type="catalytic activity">
    <reaction evidence="1">
        <text>alpha-D-glucosamine 1-phosphate + acetyl-CoA = N-acetyl-alpha-D-glucosamine 1-phosphate + CoA + H(+)</text>
        <dbReference type="Rhea" id="RHEA:13725"/>
        <dbReference type="ChEBI" id="CHEBI:15378"/>
        <dbReference type="ChEBI" id="CHEBI:57287"/>
        <dbReference type="ChEBI" id="CHEBI:57288"/>
        <dbReference type="ChEBI" id="CHEBI:57776"/>
        <dbReference type="ChEBI" id="CHEBI:58516"/>
        <dbReference type="EC" id="2.3.1.157"/>
    </reaction>
</comment>
<comment type="catalytic activity">
    <reaction evidence="1">
        <text>N-acetyl-alpha-D-glucosamine 1-phosphate + UTP + H(+) = UDP-N-acetyl-alpha-D-glucosamine + diphosphate</text>
        <dbReference type="Rhea" id="RHEA:13509"/>
        <dbReference type="ChEBI" id="CHEBI:15378"/>
        <dbReference type="ChEBI" id="CHEBI:33019"/>
        <dbReference type="ChEBI" id="CHEBI:46398"/>
        <dbReference type="ChEBI" id="CHEBI:57705"/>
        <dbReference type="ChEBI" id="CHEBI:57776"/>
        <dbReference type="EC" id="2.7.7.23"/>
    </reaction>
</comment>
<comment type="cofactor">
    <cofactor evidence="1">
        <name>Mg(2+)</name>
        <dbReference type="ChEBI" id="CHEBI:18420"/>
    </cofactor>
    <text evidence="1">Binds 1 Mg(2+) ion per subunit.</text>
</comment>
<comment type="pathway">
    <text evidence="1">Nucleotide-sugar biosynthesis; UDP-N-acetyl-alpha-D-glucosamine biosynthesis; N-acetyl-alpha-D-glucosamine 1-phosphate from alpha-D-glucosamine 6-phosphate (route II): step 2/2.</text>
</comment>
<comment type="pathway">
    <text evidence="1">Nucleotide-sugar biosynthesis; UDP-N-acetyl-alpha-D-glucosamine biosynthesis; UDP-N-acetyl-alpha-D-glucosamine from N-acetyl-alpha-D-glucosamine 1-phosphate: step 1/1.</text>
</comment>
<comment type="pathway">
    <text evidence="1">Bacterial outer membrane biogenesis; LPS lipid A biosynthesis.</text>
</comment>
<comment type="subunit">
    <text evidence="1">Homotrimer.</text>
</comment>
<comment type="subcellular location">
    <subcellularLocation>
        <location evidence="1">Cytoplasm</location>
    </subcellularLocation>
</comment>
<comment type="similarity">
    <text evidence="1">In the N-terminal section; belongs to the N-acetylglucosamine-1-phosphate uridyltransferase family.</text>
</comment>
<comment type="similarity">
    <text evidence="1">In the C-terminal section; belongs to the transferase hexapeptide repeat family.</text>
</comment>
<accession>B1XLT6</accession>
<evidence type="ECO:0000255" key="1">
    <source>
        <dbReference type="HAMAP-Rule" id="MF_01631"/>
    </source>
</evidence>
<organism>
    <name type="scientific">Picosynechococcus sp. (strain ATCC 27264 / PCC 7002 / PR-6)</name>
    <name type="common">Agmenellum quadruplicatum</name>
    <dbReference type="NCBI Taxonomy" id="32049"/>
    <lineage>
        <taxon>Bacteria</taxon>
        <taxon>Bacillati</taxon>
        <taxon>Cyanobacteriota</taxon>
        <taxon>Cyanophyceae</taxon>
        <taxon>Oscillatoriophycideae</taxon>
        <taxon>Chroococcales</taxon>
        <taxon>Geminocystaceae</taxon>
        <taxon>Picosynechococcus</taxon>
    </lineage>
</organism>
<gene>
    <name evidence="1" type="primary">glmU</name>
    <name type="ordered locus">SYNPCC7002_A2633</name>
</gene>
<feature type="chain" id="PRO_1000186503" description="Bifunctional protein GlmU">
    <location>
        <begin position="1"/>
        <end position="449"/>
    </location>
</feature>
<feature type="region of interest" description="Pyrophosphorylase" evidence="1">
    <location>
        <begin position="1"/>
        <end position="226"/>
    </location>
</feature>
<feature type="region of interest" description="Linker" evidence="1">
    <location>
        <begin position="227"/>
        <end position="247"/>
    </location>
</feature>
<feature type="region of interest" description="N-acetyltransferase" evidence="1">
    <location>
        <begin position="248"/>
        <end position="449"/>
    </location>
</feature>
<feature type="active site" description="Proton acceptor" evidence="1">
    <location>
        <position position="359"/>
    </location>
</feature>
<feature type="binding site" evidence="1">
    <location>
        <begin position="7"/>
        <end position="10"/>
    </location>
    <ligand>
        <name>UDP-N-acetyl-alpha-D-glucosamine</name>
        <dbReference type="ChEBI" id="CHEBI:57705"/>
    </ligand>
</feature>
<feature type="binding site" evidence="1">
    <location>
        <position position="21"/>
    </location>
    <ligand>
        <name>UDP-N-acetyl-alpha-D-glucosamine</name>
        <dbReference type="ChEBI" id="CHEBI:57705"/>
    </ligand>
</feature>
<feature type="binding site" evidence="1">
    <location>
        <position position="73"/>
    </location>
    <ligand>
        <name>UDP-N-acetyl-alpha-D-glucosamine</name>
        <dbReference type="ChEBI" id="CHEBI:57705"/>
    </ligand>
</feature>
<feature type="binding site" evidence="1">
    <location>
        <begin position="78"/>
        <end position="79"/>
    </location>
    <ligand>
        <name>UDP-N-acetyl-alpha-D-glucosamine</name>
        <dbReference type="ChEBI" id="CHEBI:57705"/>
    </ligand>
</feature>
<feature type="binding site" evidence="1">
    <location>
        <position position="103"/>
    </location>
    <ligand>
        <name>Mg(2+)</name>
        <dbReference type="ChEBI" id="CHEBI:18420"/>
    </ligand>
</feature>
<feature type="binding site" evidence="1">
    <location>
        <position position="140"/>
    </location>
    <ligand>
        <name>UDP-N-acetyl-alpha-D-glucosamine</name>
        <dbReference type="ChEBI" id="CHEBI:57705"/>
    </ligand>
</feature>
<feature type="binding site" evidence="1">
    <location>
        <position position="155"/>
    </location>
    <ligand>
        <name>UDP-N-acetyl-alpha-D-glucosamine</name>
        <dbReference type="ChEBI" id="CHEBI:57705"/>
    </ligand>
</feature>
<feature type="binding site" evidence="1">
    <location>
        <position position="170"/>
    </location>
    <ligand>
        <name>UDP-N-acetyl-alpha-D-glucosamine</name>
        <dbReference type="ChEBI" id="CHEBI:57705"/>
    </ligand>
</feature>
<feature type="binding site" evidence="1">
    <location>
        <position position="224"/>
    </location>
    <ligand>
        <name>Mg(2+)</name>
        <dbReference type="ChEBI" id="CHEBI:18420"/>
    </ligand>
</feature>
<feature type="binding site" evidence="1">
    <location>
        <position position="224"/>
    </location>
    <ligand>
        <name>UDP-N-acetyl-alpha-D-glucosamine</name>
        <dbReference type="ChEBI" id="CHEBI:57705"/>
    </ligand>
</feature>
<feature type="binding site" evidence="1">
    <location>
        <position position="329"/>
    </location>
    <ligand>
        <name>UDP-N-acetyl-alpha-D-glucosamine</name>
        <dbReference type="ChEBI" id="CHEBI:57705"/>
    </ligand>
</feature>
<feature type="binding site" evidence="1">
    <location>
        <position position="347"/>
    </location>
    <ligand>
        <name>UDP-N-acetyl-alpha-D-glucosamine</name>
        <dbReference type="ChEBI" id="CHEBI:57705"/>
    </ligand>
</feature>
<feature type="binding site" evidence="1">
    <location>
        <position position="362"/>
    </location>
    <ligand>
        <name>UDP-N-acetyl-alpha-D-glucosamine</name>
        <dbReference type="ChEBI" id="CHEBI:57705"/>
    </ligand>
</feature>
<feature type="binding site" evidence="1">
    <location>
        <position position="373"/>
    </location>
    <ligand>
        <name>UDP-N-acetyl-alpha-D-glucosamine</name>
        <dbReference type="ChEBI" id="CHEBI:57705"/>
    </ligand>
</feature>
<feature type="binding site" evidence="1">
    <location>
        <position position="376"/>
    </location>
    <ligand>
        <name>acetyl-CoA</name>
        <dbReference type="ChEBI" id="CHEBI:57288"/>
    </ligand>
</feature>
<feature type="binding site" evidence="1">
    <location>
        <begin position="382"/>
        <end position="383"/>
    </location>
    <ligand>
        <name>acetyl-CoA</name>
        <dbReference type="ChEBI" id="CHEBI:57288"/>
    </ligand>
</feature>
<feature type="binding site" evidence="1">
    <location>
        <position position="419"/>
    </location>
    <ligand>
        <name>acetyl-CoA</name>
        <dbReference type="ChEBI" id="CHEBI:57288"/>
    </ligand>
</feature>
<feature type="binding site" evidence="1">
    <location>
        <position position="436"/>
    </location>
    <ligand>
        <name>acetyl-CoA</name>
        <dbReference type="ChEBI" id="CHEBI:57288"/>
    </ligand>
</feature>
<protein>
    <recommendedName>
        <fullName evidence="1">Bifunctional protein GlmU</fullName>
    </recommendedName>
    <domain>
        <recommendedName>
            <fullName evidence="1">UDP-N-acetylglucosamine pyrophosphorylase</fullName>
            <ecNumber evidence="1">2.7.7.23</ecNumber>
        </recommendedName>
        <alternativeName>
            <fullName evidence="1">N-acetylglucosamine-1-phosphate uridyltransferase</fullName>
        </alternativeName>
    </domain>
    <domain>
        <recommendedName>
            <fullName evidence="1">Glucosamine-1-phosphate N-acetyltransferase</fullName>
            <ecNumber evidence="1">2.3.1.157</ecNumber>
        </recommendedName>
    </domain>
</protein>
<reference key="1">
    <citation type="submission" date="2008-02" db="EMBL/GenBank/DDBJ databases">
        <title>Complete sequence of Synechococcus sp. PCC 7002.</title>
        <authorList>
            <person name="Li T."/>
            <person name="Zhao J."/>
            <person name="Zhao C."/>
            <person name="Liu Z."/>
            <person name="Zhao F."/>
            <person name="Marquardt J."/>
            <person name="Nomura C.T."/>
            <person name="Persson S."/>
            <person name="Detter J.C."/>
            <person name="Richardson P.M."/>
            <person name="Lanz C."/>
            <person name="Schuster S.C."/>
            <person name="Wang J."/>
            <person name="Li S."/>
            <person name="Huang X."/>
            <person name="Cai T."/>
            <person name="Yu Z."/>
            <person name="Luo J."/>
            <person name="Zhao J."/>
            <person name="Bryant D.A."/>
        </authorList>
    </citation>
    <scope>NUCLEOTIDE SEQUENCE [LARGE SCALE GENOMIC DNA]</scope>
    <source>
        <strain>ATCC 27264 / PCC 7002 / PR-6</strain>
    </source>
</reference>
<keyword id="KW-0012">Acyltransferase</keyword>
<keyword id="KW-0133">Cell shape</keyword>
<keyword id="KW-0961">Cell wall biogenesis/degradation</keyword>
<keyword id="KW-0963">Cytoplasm</keyword>
<keyword id="KW-0460">Magnesium</keyword>
<keyword id="KW-0479">Metal-binding</keyword>
<keyword id="KW-0511">Multifunctional enzyme</keyword>
<keyword id="KW-0548">Nucleotidyltransferase</keyword>
<keyword id="KW-0573">Peptidoglycan synthesis</keyword>
<keyword id="KW-1185">Reference proteome</keyword>
<keyword id="KW-0677">Repeat</keyword>
<keyword id="KW-0808">Transferase</keyword>
<proteinExistence type="inferred from homology"/>
<name>GLMU_PICP2</name>
<dbReference type="EC" id="2.7.7.23" evidence="1"/>
<dbReference type="EC" id="2.3.1.157" evidence="1"/>
<dbReference type="EMBL" id="CP000951">
    <property type="protein sequence ID" value="ACB00610.1"/>
    <property type="molecule type" value="Genomic_DNA"/>
</dbReference>
<dbReference type="RefSeq" id="WP_012308228.1">
    <property type="nucleotide sequence ID" value="NZ_JAHHPU010000003.1"/>
</dbReference>
<dbReference type="SMR" id="B1XLT6"/>
<dbReference type="STRING" id="32049.SYNPCC7002_A2633"/>
<dbReference type="KEGG" id="syp:SYNPCC7002_A2633"/>
<dbReference type="eggNOG" id="COG1207">
    <property type="taxonomic scope" value="Bacteria"/>
</dbReference>
<dbReference type="HOGENOM" id="CLU_029499_15_2_3"/>
<dbReference type="UniPathway" id="UPA00113">
    <property type="reaction ID" value="UER00532"/>
</dbReference>
<dbReference type="UniPathway" id="UPA00113">
    <property type="reaction ID" value="UER00533"/>
</dbReference>
<dbReference type="UniPathway" id="UPA00973"/>
<dbReference type="Proteomes" id="UP000001688">
    <property type="component" value="Chromosome"/>
</dbReference>
<dbReference type="GO" id="GO:0031470">
    <property type="term" value="C:carboxysome"/>
    <property type="evidence" value="ECO:0007669"/>
    <property type="project" value="UniProtKB-ARBA"/>
</dbReference>
<dbReference type="GO" id="GO:0005737">
    <property type="term" value="C:cytoplasm"/>
    <property type="evidence" value="ECO:0007669"/>
    <property type="project" value="UniProtKB-SubCell"/>
</dbReference>
<dbReference type="GO" id="GO:0016020">
    <property type="term" value="C:membrane"/>
    <property type="evidence" value="ECO:0007669"/>
    <property type="project" value="GOC"/>
</dbReference>
<dbReference type="GO" id="GO:0019134">
    <property type="term" value="F:glucosamine-1-phosphate N-acetyltransferase activity"/>
    <property type="evidence" value="ECO:0007669"/>
    <property type="project" value="UniProtKB-UniRule"/>
</dbReference>
<dbReference type="GO" id="GO:0000287">
    <property type="term" value="F:magnesium ion binding"/>
    <property type="evidence" value="ECO:0007669"/>
    <property type="project" value="UniProtKB-UniRule"/>
</dbReference>
<dbReference type="GO" id="GO:0043886">
    <property type="term" value="F:structural constituent of carboxysome shell"/>
    <property type="evidence" value="ECO:0007669"/>
    <property type="project" value="UniProtKB-ARBA"/>
</dbReference>
<dbReference type="GO" id="GO:0003977">
    <property type="term" value="F:UDP-N-acetylglucosamine diphosphorylase activity"/>
    <property type="evidence" value="ECO:0007669"/>
    <property type="project" value="UniProtKB-UniRule"/>
</dbReference>
<dbReference type="GO" id="GO:0000902">
    <property type="term" value="P:cell morphogenesis"/>
    <property type="evidence" value="ECO:0007669"/>
    <property type="project" value="UniProtKB-UniRule"/>
</dbReference>
<dbReference type="GO" id="GO:0071555">
    <property type="term" value="P:cell wall organization"/>
    <property type="evidence" value="ECO:0007669"/>
    <property type="project" value="UniProtKB-KW"/>
</dbReference>
<dbReference type="GO" id="GO:0009245">
    <property type="term" value="P:lipid A biosynthetic process"/>
    <property type="evidence" value="ECO:0007669"/>
    <property type="project" value="UniProtKB-UniRule"/>
</dbReference>
<dbReference type="GO" id="GO:0009252">
    <property type="term" value="P:peptidoglycan biosynthetic process"/>
    <property type="evidence" value="ECO:0007669"/>
    <property type="project" value="UniProtKB-UniRule"/>
</dbReference>
<dbReference type="GO" id="GO:0008360">
    <property type="term" value="P:regulation of cell shape"/>
    <property type="evidence" value="ECO:0007669"/>
    <property type="project" value="UniProtKB-KW"/>
</dbReference>
<dbReference type="GO" id="GO:0006048">
    <property type="term" value="P:UDP-N-acetylglucosamine biosynthetic process"/>
    <property type="evidence" value="ECO:0007669"/>
    <property type="project" value="UniProtKB-UniPathway"/>
</dbReference>
<dbReference type="CDD" id="cd02540">
    <property type="entry name" value="GT2_GlmU_N_bac"/>
    <property type="match status" value="1"/>
</dbReference>
<dbReference type="CDD" id="cd03353">
    <property type="entry name" value="LbH_GlmU_C"/>
    <property type="match status" value="1"/>
</dbReference>
<dbReference type="Gene3D" id="2.160.10.10">
    <property type="entry name" value="Hexapeptide repeat proteins"/>
    <property type="match status" value="1"/>
</dbReference>
<dbReference type="Gene3D" id="3.90.550.10">
    <property type="entry name" value="Spore Coat Polysaccharide Biosynthesis Protein SpsA, Chain A"/>
    <property type="match status" value="1"/>
</dbReference>
<dbReference type="HAMAP" id="MF_01631">
    <property type="entry name" value="GlmU"/>
    <property type="match status" value="1"/>
</dbReference>
<dbReference type="InterPro" id="IPR005882">
    <property type="entry name" value="Bifunctional_GlmU"/>
</dbReference>
<dbReference type="InterPro" id="IPR050065">
    <property type="entry name" value="GlmU-like"/>
</dbReference>
<dbReference type="InterPro" id="IPR038009">
    <property type="entry name" value="GlmU_C_LbH"/>
</dbReference>
<dbReference type="InterPro" id="IPR001451">
    <property type="entry name" value="Hexapep"/>
</dbReference>
<dbReference type="InterPro" id="IPR025877">
    <property type="entry name" value="MobA-like_NTP_Trfase"/>
</dbReference>
<dbReference type="InterPro" id="IPR029044">
    <property type="entry name" value="Nucleotide-diphossugar_trans"/>
</dbReference>
<dbReference type="InterPro" id="IPR011004">
    <property type="entry name" value="Trimer_LpxA-like_sf"/>
</dbReference>
<dbReference type="NCBIfam" id="TIGR01173">
    <property type="entry name" value="glmU"/>
    <property type="match status" value="1"/>
</dbReference>
<dbReference type="NCBIfam" id="NF010940">
    <property type="entry name" value="PRK14360.1"/>
    <property type="match status" value="1"/>
</dbReference>
<dbReference type="PANTHER" id="PTHR43584:SF3">
    <property type="entry name" value="BIFUNCTIONAL PROTEIN GLMU"/>
    <property type="match status" value="1"/>
</dbReference>
<dbReference type="PANTHER" id="PTHR43584">
    <property type="entry name" value="NUCLEOTIDYL TRANSFERASE"/>
    <property type="match status" value="1"/>
</dbReference>
<dbReference type="Pfam" id="PF00132">
    <property type="entry name" value="Hexapep"/>
    <property type="match status" value="2"/>
</dbReference>
<dbReference type="Pfam" id="PF12804">
    <property type="entry name" value="NTP_transf_3"/>
    <property type="match status" value="1"/>
</dbReference>
<dbReference type="SUPFAM" id="SSF53448">
    <property type="entry name" value="Nucleotide-diphospho-sugar transferases"/>
    <property type="match status" value="1"/>
</dbReference>
<dbReference type="SUPFAM" id="SSF51161">
    <property type="entry name" value="Trimeric LpxA-like enzymes"/>
    <property type="match status" value="1"/>
</dbReference>